<reference key="1">
    <citation type="journal article" date="1995" name="Eur. J. Biochem.">
        <title>Molecular characterization and physiological regulation of a TATA-less gene encoding chicken gastrin.</title>
        <authorList>
            <person name="Wu S.V."/>
            <person name="Dimaline R."/>
            <person name="Walsh J.H."/>
            <person name="Campbell B.J."/>
        </authorList>
    </citation>
    <scope>NUCLEOTIDE SEQUENCE [GENOMIC DNA / MRNA]</scope>
</reference>
<reference key="2">
    <citation type="journal article" date="1992" name="Peptides">
        <title>Identification of four chicken gastrins, obtained by processing at post-Phe bonds.</title>
        <authorList>
            <person name="Bjoernskov I."/>
            <person name="Rehfeld J.F."/>
            <person name="Johnsen A.H."/>
        </authorList>
    </citation>
    <scope>PROTEIN SEQUENCE OF 41-93</scope>
    <scope>SULFATION AT TYR-87</scope>
    <scope>AMIDATION AT PHE-93</scope>
    <source>
        <tissue>Gastric antrum</tissue>
    </source>
</reference>
<reference key="3">
    <citation type="journal article" date="1986" name="FEBS Lett.">
        <title>Isolation from chicken antrum, and primary amino acid sequence of a novel 36-residue peptide of the gastrin/CCK family.</title>
        <authorList>
            <person name="Dimaline R."/>
            <person name="Young J."/>
            <person name="Gregory H."/>
        </authorList>
    </citation>
    <scope>PROTEIN SEQUENCE OF 58-93</scope>
    <source>
        <tissue>Gastric antrum</tissue>
    </source>
</reference>
<protein>
    <recommendedName>
        <fullName>Gastrin/cholecystokinin-like peptide</fullName>
    </recommendedName>
    <alternativeName>
        <fullName>Antral peptide</fullName>
    </alternativeName>
</protein>
<sequence length="105" mass="11625">MKTKVFLGLILSAAVTACLCRPAAKAPGGSHRPTSSLARRDWPEPPSQEQQQRFISRFLPHVFAELSDRKGFVQGNGAVEALHDHFYPDWMDFGRRSTEDAADAA</sequence>
<accession>P09859</accession>
<feature type="signal peptide" evidence="1">
    <location>
        <begin position="1"/>
        <end position="20"/>
    </location>
</feature>
<feature type="propeptide" id="PRO_0000010656">
    <location>
        <begin position="21"/>
        <end position="38"/>
    </location>
</feature>
<feature type="peptide" id="PRO_0000010657" description="Gastrin/cholecystokinin-like peptide">
    <location>
        <begin position="41"/>
        <end position="93"/>
    </location>
</feature>
<feature type="propeptide" id="PRO_0000010658">
    <location>
        <begin position="97"/>
        <end position="105"/>
    </location>
</feature>
<feature type="region of interest" description="Disordered" evidence="2">
    <location>
        <begin position="24"/>
        <end position="51"/>
    </location>
</feature>
<feature type="modified residue" description="Sulfotyrosine" evidence="3">
    <location>
        <position position="87"/>
    </location>
</feature>
<feature type="modified residue" description="Phenylalanine amide" evidence="3 4">
    <location>
        <position position="93"/>
    </location>
</feature>
<evidence type="ECO:0000255" key="1"/>
<evidence type="ECO:0000256" key="2">
    <source>
        <dbReference type="SAM" id="MobiDB-lite"/>
    </source>
</evidence>
<evidence type="ECO:0000269" key="3">
    <source>
    </source>
</evidence>
<evidence type="ECO:0000269" key="4">
    <source>
    </source>
</evidence>
<evidence type="ECO:0000305" key="5"/>
<name>ANTR_CHICK</name>
<proteinExistence type="evidence at protein level"/>
<comment type="function">
    <text>Potent stimulus of gastric acid, but not of pancreatic secretion.</text>
</comment>
<comment type="subcellular location">
    <subcellularLocation>
        <location>Secreted</location>
    </subcellularLocation>
</comment>
<comment type="similarity">
    <text evidence="5">Belongs to the gastrin/cholecystokinin family.</text>
</comment>
<dbReference type="EMBL" id="U25125">
    <property type="protein sequence ID" value="AAA65926.1"/>
    <property type="molecule type" value="Genomic_DNA"/>
</dbReference>
<dbReference type="EMBL" id="U25124">
    <property type="protein sequence ID" value="AAA65925.1"/>
    <property type="molecule type" value="mRNA"/>
</dbReference>
<dbReference type="PIR" id="S65677">
    <property type="entry name" value="S65677"/>
</dbReference>
<dbReference type="RefSeq" id="NP_990731.1">
    <property type="nucleotide sequence ID" value="NM_205400.1"/>
</dbReference>
<dbReference type="STRING" id="9031.ENSGALP00000041428"/>
<dbReference type="PaxDb" id="9031-ENSGALP00000041428"/>
<dbReference type="Ensembl" id="ENSGALT00010051399.1">
    <property type="protein sequence ID" value="ENSGALP00010030590.1"/>
    <property type="gene ID" value="ENSGALG00010021209.1"/>
</dbReference>
<dbReference type="GeneID" id="396365"/>
<dbReference type="KEGG" id="gga:396365"/>
<dbReference type="VEuPathDB" id="HostDB:LOC396365"/>
<dbReference type="eggNOG" id="ENOG502SA9S">
    <property type="taxonomic scope" value="Eukaryota"/>
</dbReference>
<dbReference type="GeneTree" id="ENSGT01030000235196"/>
<dbReference type="InParanoid" id="P09859"/>
<dbReference type="OMA" id="THFPNWM"/>
<dbReference type="OrthoDB" id="9924917at2759"/>
<dbReference type="PRO" id="PR:P09859"/>
<dbReference type="Proteomes" id="UP000000539">
    <property type="component" value="Chromosome 27"/>
</dbReference>
<dbReference type="GO" id="GO:0005576">
    <property type="term" value="C:extracellular region"/>
    <property type="evidence" value="ECO:0007669"/>
    <property type="project" value="UniProtKB-SubCell"/>
</dbReference>
<dbReference type="GO" id="GO:0005179">
    <property type="term" value="F:hormone activity"/>
    <property type="evidence" value="ECO:0007669"/>
    <property type="project" value="UniProtKB-KW"/>
</dbReference>
<dbReference type="GO" id="GO:0007586">
    <property type="term" value="P:digestion"/>
    <property type="evidence" value="ECO:0007669"/>
    <property type="project" value="UniProtKB-KW"/>
</dbReference>
<dbReference type="InterPro" id="IPR001651">
    <property type="entry name" value="Gastrin/CCK"/>
</dbReference>
<dbReference type="InterPro" id="IPR013152">
    <property type="entry name" value="Gastrin/cholecystokinin_CS"/>
</dbReference>
<dbReference type="Pfam" id="PF00918">
    <property type="entry name" value="Gastrin"/>
    <property type="match status" value="1"/>
</dbReference>
<dbReference type="PROSITE" id="PS00259">
    <property type="entry name" value="GASTRIN"/>
    <property type="match status" value="1"/>
</dbReference>
<organism>
    <name type="scientific">Gallus gallus</name>
    <name type="common">Chicken</name>
    <dbReference type="NCBI Taxonomy" id="9031"/>
    <lineage>
        <taxon>Eukaryota</taxon>
        <taxon>Metazoa</taxon>
        <taxon>Chordata</taxon>
        <taxon>Craniata</taxon>
        <taxon>Vertebrata</taxon>
        <taxon>Euteleostomi</taxon>
        <taxon>Archelosauria</taxon>
        <taxon>Archosauria</taxon>
        <taxon>Dinosauria</taxon>
        <taxon>Saurischia</taxon>
        <taxon>Theropoda</taxon>
        <taxon>Coelurosauria</taxon>
        <taxon>Aves</taxon>
        <taxon>Neognathae</taxon>
        <taxon>Galloanserae</taxon>
        <taxon>Galliformes</taxon>
        <taxon>Phasianidae</taxon>
        <taxon>Phasianinae</taxon>
        <taxon>Gallus</taxon>
    </lineage>
</organism>
<keyword id="KW-0027">Amidation</keyword>
<keyword id="KW-0165">Cleavage on pair of basic residues</keyword>
<keyword id="KW-0222">Digestion</keyword>
<keyword id="KW-0903">Direct protein sequencing</keyword>
<keyword id="KW-0372">Hormone</keyword>
<keyword id="KW-1185">Reference proteome</keyword>
<keyword id="KW-0964">Secreted</keyword>
<keyword id="KW-0732">Signal</keyword>
<keyword id="KW-0765">Sulfation</keyword>